<feature type="chain" id="PRO_0000151561" description="Arginine--tRNA ligase">
    <location>
        <begin position="1"/>
        <end position="569"/>
    </location>
</feature>
<feature type="short sequence motif" description="'HIGH' region">
    <location>
        <begin position="123"/>
        <end position="133"/>
    </location>
</feature>
<dbReference type="EC" id="6.1.1.19" evidence="1"/>
<dbReference type="EMBL" id="AE009951">
    <property type="protein sequence ID" value="AAL94702.1"/>
    <property type="molecule type" value="Genomic_DNA"/>
</dbReference>
<dbReference type="RefSeq" id="NP_603403.1">
    <property type="nucleotide sequence ID" value="NC_003454.1"/>
</dbReference>
<dbReference type="RefSeq" id="WP_011016438.1">
    <property type="nucleotide sequence ID" value="NZ_CP028101.1"/>
</dbReference>
<dbReference type="SMR" id="Q8RG14"/>
<dbReference type="FunCoup" id="Q8RG14">
    <property type="interactions" value="348"/>
</dbReference>
<dbReference type="STRING" id="190304.FN0506"/>
<dbReference type="PaxDb" id="190304-FN0506"/>
<dbReference type="EnsemblBacteria" id="AAL94702">
    <property type="protein sequence ID" value="AAL94702"/>
    <property type="gene ID" value="FN0506"/>
</dbReference>
<dbReference type="GeneID" id="79783512"/>
<dbReference type="KEGG" id="fnu:FN0506"/>
<dbReference type="PATRIC" id="fig|190304.8.peg.1076"/>
<dbReference type="eggNOG" id="COG0018">
    <property type="taxonomic scope" value="Bacteria"/>
</dbReference>
<dbReference type="HOGENOM" id="CLU_006406_6_1_0"/>
<dbReference type="InParanoid" id="Q8RG14"/>
<dbReference type="BioCyc" id="FNUC190304:G1FZS-1098-MONOMER"/>
<dbReference type="Proteomes" id="UP000002521">
    <property type="component" value="Chromosome"/>
</dbReference>
<dbReference type="GO" id="GO:0005737">
    <property type="term" value="C:cytoplasm"/>
    <property type="evidence" value="ECO:0007669"/>
    <property type="project" value="UniProtKB-SubCell"/>
</dbReference>
<dbReference type="GO" id="GO:0004814">
    <property type="term" value="F:arginine-tRNA ligase activity"/>
    <property type="evidence" value="ECO:0000318"/>
    <property type="project" value="GO_Central"/>
</dbReference>
<dbReference type="GO" id="GO:0005524">
    <property type="term" value="F:ATP binding"/>
    <property type="evidence" value="ECO:0007669"/>
    <property type="project" value="UniProtKB-UniRule"/>
</dbReference>
<dbReference type="GO" id="GO:0006420">
    <property type="term" value="P:arginyl-tRNA aminoacylation"/>
    <property type="evidence" value="ECO:0000318"/>
    <property type="project" value="GO_Central"/>
</dbReference>
<dbReference type="CDD" id="cd07956">
    <property type="entry name" value="Anticodon_Ia_Arg"/>
    <property type="match status" value="1"/>
</dbReference>
<dbReference type="CDD" id="cd00671">
    <property type="entry name" value="ArgRS_core"/>
    <property type="match status" value="1"/>
</dbReference>
<dbReference type="FunFam" id="3.40.50.620:FF:000116">
    <property type="entry name" value="Arginine--tRNA ligase"/>
    <property type="match status" value="1"/>
</dbReference>
<dbReference type="FunFam" id="3.30.1360.70:FF:000002">
    <property type="entry name" value="arginine--tRNA ligase, cytoplasmic"/>
    <property type="match status" value="1"/>
</dbReference>
<dbReference type="FunFam" id="1.10.730.10:FF:000006">
    <property type="entry name" value="Arginyl-tRNA synthetase 2, mitochondrial"/>
    <property type="match status" value="1"/>
</dbReference>
<dbReference type="Gene3D" id="3.30.1360.70">
    <property type="entry name" value="Arginyl tRNA synthetase N-terminal domain"/>
    <property type="match status" value="1"/>
</dbReference>
<dbReference type="Gene3D" id="3.40.50.620">
    <property type="entry name" value="HUPs"/>
    <property type="match status" value="1"/>
</dbReference>
<dbReference type="Gene3D" id="1.10.730.10">
    <property type="entry name" value="Isoleucyl-tRNA Synthetase, Domain 1"/>
    <property type="match status" value="1"/>
</dbReference>
<dbReference type="HAMAP" id="MF_00123">
    <property type="entry name" value="Arg_tRNA_synth"/>
    <property type="match status" value="1"/>
</dbReference>
<dbReference type="InterPro" id="IPR001412">
    <property type="entry name" value="aa-tRNA-synth_I_CS"/>
</dbReference>
<dbReference type="InterPro" id="IPR001278">
    <property type="entry name" value="Arg-tRNA-ligase"/>
</dbReference>
<dbReference type="InterPro" id="IPR005148">
    <property type="entry name" value="Arg-tRNA-synth_N"/>
</dbReference>
<dbReference type="InterPro" id="IPR036695">
    <property type="entry name" value="Arg-tRNA-synth_N_sf"/>
</dbReference>
<dbReference type="InterPro" id="IPR035684">
    <property type="entry name" value="ArgRS_core"/>
</dbReference>
<dbReference type="InterPro" id="IPR008909">
    <property type="entry name" value="DALR_anticod-bd"/>
</dbReference>
<dbReference type="InterPro" id="IPR014729">
    <property type="entry name" value="Rossmann-like_a/b/a_fold"/>
</dbReference>
<dbReference type="InterPro" id="IPR009080">
    <property type="entry name" value="tRNAsynth_Ia_anticodon-bd"/>
</dbReference>
<dbReference type="NCBIfam" id="TIGR00456">
    <property type="entry name" value="argS"/>
    <property type="match status" value="1"/>
</dbReference>
<dbReference type="PANTHER" id="PTHR11956:SF5">
    <property type="entry name" value="ARGININE--TRNA LIGASE, CYTOPLASMIC"/>
    <property type="match status" value="1"/>
</dbReference>
<dbReference type="PANTHER" id="PTHR11956">
    <property type="entry name" value="ARGINYL-TRNA SYNTHETASE"/>
    <property type="match status" value="1"/>
</dbReference>
<dbReference type="Pfam" id="PF03485">
    <property type="entry name" value="Arg_tRNA_synt_N"/>
    <property type="match status" value="1"/>
</dbReference>
<dbReference type="Pfam" id="PF05746">
    <property type="entry name" value="DALR_1"/>
    <property type="match status" value="1"/>
</dbReference>
<dbReference type="Pfam" id="PF00750">
    <property type="entry name" value="tRNA-synt_1d"/>
    <property type="match status" value="1"/>
</dbReference>
<dbReference type="PRINTS" id="PR01038">
    <property type="entry name" value="TRNASYNTHARG"/>
</dbReference>
<dbReference type="SMART" id="SM01016">
    <property type="entry name" value="Arg_tRNA_synt_N"/>
    <property type="match status" value="1"/>
</dbReference>
<dbReference type="SMART" id="SM00836">
    <property type="entry name" value="DALR_1"/>
    <property type="match status" value="1"/>
</dbReference>
<dbReference type="SUPFAM" id="SSF47323">
    <property type="entry name" value="Anticodon-binding domain of a subclass of class I aminoacyl-tRNA synthetases"/>
    <property type="match status" value="1"/>
</dbReference>
<dbReference type="SUPFAM" id="SSF55190">
    <property type="entry name" value="Arginyl-tRNA synthetase (ArgRS), N-terminal 'additional' domain"/>
    <property type="match status" value="1"/>
</dbReference>
<dbReference type="SUPFAM" id="SSF52374">
    <property type="entry name" value="Nucleotidylyl transferase"/>
    <property type="match status" value="1"/>
</dbReference>
<dbReference type="PROSITE" id="PS00178">
    <property type="entry name" value="AA_TRNA_LIGASE_I"/>
    <property type="match status" value="1"/>
</dbReference>
<keyword id="KW-0030">Aminoacyl-tRNA synthetase</keyword>
<keyword id="KW-0067">ATP-binding</keyword>
<keyword id="KW-0963">Cytoplasm</keyword>
<keyword id="KW-0436">Ligase</keyword>
<keyword id="KW-0547">Nucleotide-binding</keyword>
<keyword id="KW-0648">Protein biosynthesis</keyword>
<keyword id="KW-1185">Reference proteome</keyword>
<comment type="catalytic activity">
    <reaction evidence="1">
        <text>tRNA(Arg) + L-arginine + ATP = L-arginyl-tRNA(Arg) + AMP + diphosphate</text>
        <dbReference type="Rhea" id="RHEA:20301"/>
        <dbReference type="Rhea" id="RHEA-COMP:9658"/>
        <dbReference type="Rhea" id="RHEA-COMP:9673"/>
        <dbReference type="ChEBI" id="CHEBI:30616"/>
        <dbReference type="ChEBI" id="CHEBI:32682"/>
        <dbReference type="ChEBI" id="CHEBI:33019"/>
        <dbReference type="ChEBI" id="CHEBI:78442"/>
        <dbReference type="ChEBI" id="CHEBI:78513"/>
        <dbReference type="ChEBI" id="CHEBI:456215"/>
        <dbReference type="EC" id="6.1.1.19"/>
    </reaction>
</comment>
<comment type="subunit">
    <text evidence="1">Monomer.</text>
</comment>
<comment type="subcellular location">
    <subcellularLocation>
        <location evidence="1">Cytoplasm</location>
    </subcellularLocation>
</comment>
<comment type="similarity">
    <text evidence="1">Belongs to the class-I aminoacyl-tRNA synthetase family.</text>
</comment>
<gene>
    <name evidence="1" type="primary">argS</name>
    <name type="ordered locus">FN0506</name>
</gene>
<organism>
    <name type="scientific">Fusobacterium nucleatum subsp. nucleatum (strain ATCC 25586 / DSM 15643 / BCRC 10681 / CIP 101130 / JCM 8532 / KCTC 2640 / LMG 13131 / VPI 4355)</name>
    <dbReference type="NCBI Taxonomy" id="190304"/>
    <lineage>
        <taxon>Bacteria</taxon>
        <taxon>Fusobacteriati</taxon>
        <taxon>Fusobacteriota</taxon>
        <taxon>Fusobacteriia</taxon>
        <taxon>Fusobacteriales</taxon>
        <taxon>Fusobacteriaceae</taxon>
        <taxon>Fusobacterium</taxon>
    </lineage>
</organism>
<reference key="1">
    <citation type="journal article" date="2002" name="J. Bacteriol.">
        <title>Genome sequence and analysis of the oral bacterium Fusobacterium nucleatum strain ATCC 25586.</title>
        <authorList>
            <person name="Kapatral V."/>
            <person name="Anderson I."/>
            <person name="Ivanova N."/>
            <person name="Reznik G."/>
            <person name="Los T."/>
            <person name="Lykidis A."/>
            <person name="Bhattacharyya A."/>
            <person name="Bartman A."/>
            <person name="Gardner W."/>
            <person name="Grechkin G."/>
            <person name="Zhu L."/>
            <person name="Vasieva O."/>
            <person name="Chu L."/>
            <person name="Kogan Y."/>
            <person name="Chaga O."/>
            <person name="Goltsman E."/>
            <person name="Bernal A."/>
            <person name="Larsen N."/>
            <person name="D'Souza M."/>
            <person name="Walunas T."/>
            <person name="Pusch G."/>
            <person name="Haselkorn R."/>
            <person name="Fonstein M."/>
            <person name="Kyrpides N.C."/>
            <person name="Overbeek R."/>
        </authorList>
    </citation>
    <scope>NUCLEOTIDE SEQUENCE [LARGE SCALE GENOMIC DNA]</scope>
    <source>
        <strain>ATCC 25586 / DSM 15643 / BCRC 10681 / CIP 101130 / JCM 8532 / KCTC 2640 / LMG 13131 / VPI 4355</strain>
    </source>
</reference>
<proteinExistence type="inferred from homology"/>
<protein>
    <recommendedName>
        <fullName evidence="1">Arginine--tRNA ligase</fullName>
        <ecNumber evidence="1">6.1.1.19</ecNumber>
    </recommendedName>
    <alternativeName>
        <fullName evidence="1">Arginyl-tRNA synthetase</fullName>
        <shortName evidence="1">ArgRS</shortName>
    </alternativeName>
</protein>
<accession>Q8RG14</accession>
<evidence type="ECO:0000255" key="1">
    <source>
        <dbReference type="HAMAP-Rule" id="MF_00123"/>
    </source>
</evidence>
<sequence length="569" mass="65719">MKITSRELTDIFQKHVENLFPNKELKPVEITVATNENFGDYQCNFAMINSKIIGDNPRKIAEEVKNNFPYGDVIEKLEVAGPGFINIFLSDKYISNSIKKIGEDYDFSFLNRKGKVIIDFSSPNIAKRMHIGHLRSTIIGESISRIYRFLGYDVVADNHIGDWGTQFGKLIVGYRNWLDKKAYKKNAIEELERVYVKFSDEAEKDPSLEDLARAELKKVQDGEEENTKLWKEFITESLKEYNKLYKRLDVHFDTYYGESFYNDMMADVVKELVDKKIAVDDDGAKVVFFDEKDNLFPCIVQKKDGAYLYSTSDIATVKFRKNTYDVNRMIYLTDARQQDHFKQFFKITDMLGWNIEKYHIWFGIIRFADGILSTRKGNVIKLEELLDEAHSRAYDVVNEKNPNLSEGEKQNIAEVVGVSSVKYADLSQNKQSDIIFEWDKMLSFEGNTAPYLLYTYARIQSILRKVAELNIGLNENIEIKTENKIEKSLATYLLAFPISVLKAGETFKPNLIADYLYELSKKLNSFYNNCPILNQDIETLKSRALLIKKTGEVLKEGLELLGIPILNKM</sequence>
<name>SYR_FUSNN</name>